<evidence type="ECO:0000255" key="1">
    <source>
        <dbReference type="HAMAP-Rule" id="MF_00110"/>
    </source>
</evidence>
<organism>
    <name type="scientific">Stutzerimonas stutzeri (strain A1501)</name>
    <name type="common">Pseudomonas stutzeri</name>
    <dbReference type="NCBI Taxonomy" id="379731"/>
    <lineage>
        <taxon>Bacteria</taxon>
        <taxon>Pseudomonadati</taxon>
        <taxon>Pseudomonadota</taxon>
        <taxon>Gammaproteobacteria</taxon>
        <taxon>Pseudomonadales</taxon>
        <taxon>Pseudomonadaceae</taxon>
        <taxon>Stutzerimonas</taxon>
    </lineage>
</organism>
<gene>
    <name evidence="1" type="primary">aroB</name>
    <name type="ordered locus">PST_0559</name>
</gene>
<dbReference type="EC" id="4.2.3.4" evidence="1"/>
<dbReference type="EMBL" id="CP000304">
    <property type="protein sequence ID" value="ABP78265.1"/>
    <property type="molecule type" value="Genomic_DNA"/>
</dbReference>
<dbReference type="RefSeq" id="WP_011911792.1">
    <property type="nucleotide sequence ID" value="NC_009434.1"/>
</dbReference>
<dbReference type="SMR" id="A4VH14"/>
<dbReference type="GeneID" id="66819821"/>
<dbReference type="KEGG" id="psa:PST_0559"/>
<dbReference type="eggNOG" id="COG0337">
    <property type="taxonomic scope" value="Bacteria"/>
</dbReference>
<dbReference type="HOGENOM" id="CLU_001201_0_2_6"/>
<dbReference type="UniPathway" id="UPA00053">
    <property type="reaction ID" value="UER00085"/>
</dbReference>
<dbReference type="Proteomes" id="UP000000233">
    <property type="component" value="Chromosome"/>
</dbReference>
<dbReference type="GO" id="GO:0005737">
    <property type="term" value="C:cytoplasm"/>
    <property type="evidence" value="ECO:0007669"/>
    <property type="project" value="UniProtKB-SubCell"/>
</dbReference>
<dbReference type="GO" id="GO:0003856">
    <property type="term" value="F:3-dehydroquinate synthase activity"/>
    <property type="evidence" value="ECO:0007669"/>
    <property type="project" value="UniProtKB-UniRule"/>
</dbReference>
<dbReference type="GO" id="GO:0046872">
    <property type="term" value="F:metal ion binding"/>
    <property type="evidence" value="ECO:0007669"/>
    <property type="project" value="UniProtKB-KW"/>
</dbReference>
<dbReference type="GO" id="GO:0000166">
    <property type="term" value="F:nucleotide binding"/>
    <property type="evidence" value="ECO:0007669"/>
    <property type="project" value="UniProtKB-KW"/>
</dbReference>
<dbReference type="GO" id="GO:0008652">
    <property type="term" value="P:amino acid biosynthetic process"/>
    <property type="evidence" value="ECO:0007669"/>
    <property type="project" value="UniProtKB-KW"/>
</dbReference>
<dbReference type="GO" id="GO:0009073">
    <property type="term" value="P:aromatic amino acid family biosynthetic process"/>
    <property type="evidence" value="ECO:0007669"/>
    <property type="project" value="UniProtKB-KW"/>
</dbReference>
<dbReference type="GO" id="GO:0009423">
    <property type="term" value="P:chorismate biosynthetic process"/>
    <property type="evidence" value="ECO:0007669"/>
    <property type="project" value="UniProtKB-UniRule"/>
</dbReference>
<dbReference type="CDD" id="cd08195">
    <property type="entry name" value="DHQS"/>
    <property type="match status" value="1"/>
</dbReference>
<dbReference type="FunFam" id="1.20.1090.10:FF:000002">
    <property type="entry name" value="3-dehydroquinate synthase"/>
    <property type="match status" value="1"/>
</dbReference>
<dbReference type="FunFam" id="3.40.50.1970:FF:000001">
    <property type="entry name" value="3-dehydroquinate synthase"/>
    <property type="match status" value="1"/>
</dbReference>
<dbReference type="Gene3D" id="3.40.50.1970">
    <property type="match status" value="1"/>
</dbReference>
<dbReference type="Gene3D" id="1.20.1090.10">
    <property type="entry name" value="Dehydroquinate synthase-like - alpha domain"/>
    <property type="match status" value="1"/>
</dbReference>
<dbReference type="HAMAP" id="MF_00110">
    <property type="entry name" value="DHQ_synthase"/>
    <property type="match status" value="1"/>
</dbReference>
<dbReference type="InterPro" id="IPR050071">
    <property type="entry name" value="Dehydroquinate_synthase"/>
</dbReference>
<dbReference type="InterPro" id="IPR016037">
    <property type="entry name" value="DHQ_synth_AroB"/>
</dbReference>
<dbReference type="InterPro" id="IPR030963">
    <property type="entry name" value="DHQ_synth_fam"/>
</dbReference>
<dbReference type="InterPro" id="IPR030960">
    <property type="entry name" value="DHQS/DOIS_N"/>
</dbReference>
<dbReference type="InterPro" id="IPR056179">
    <property type="entry name" value="DHQS_C"/>
</dbReference>
<dbReference type="NCBIfam" id="TIGR01357">
    <property type="entry name" value="aroB"/>
    <property type="match status" value="1"/>
</dbReference>
<dbReference type="PANTHER" id="PTHR43622">
    <property type="entry name" value="3-DEHYDROQUINATE SYNTHASE"/>
    <property type="match status" value="1"/>
</dbReference>
<dbReference type="PANTHER" id="PTHR43622:SF7">
    <property type="entry name" value="3-DEHYDROQUINATE SYNTHASE, CHLOROPLASTIC"/>
    <property type="match status" value="1"/>
</dbReference>
<dbReference type="Pfam" id="PF01761">
    <property type="entry name" value="DHQ_synthase"/>
    <property type="match status" value="1"/>
</dbReference>
<dbReference type="Pfam" id="PF24621">
    <property type="entry name" value="DHQS_C"/>
    <property type="match status" value="1"/>
</dbReference>
<dbReference type="PIRSF" id="PIRSF001455">
    <property type="entry name" value="DHQ_synth"/>
    <property type="match status" value="1"/>
</dbReference>
<dbReference type="SUPFAM" id="SSF56796">
    <property type="entry name" value="Dehydroquinate synthase-like"/>
    <property type="match status" value="1"/>
</dbReference>
<name>AROB_STUS1</name>
<accession>A4VH14</accession>
<feature type="chain" id="PRO_1000094575" description="3-dehydroquinate synthase">
    <location>
        <begin position="1"/>
        <end position="367"/>
    </location>
</feature>
<feature type="binding site" evidence="1">
    <location>
        <begin position="69"/>
        <end position="74"/>
    </location>
    <ligand>
        <name>NAD(+)</name>
        <dbReference type="ChEBI" id="CHEBI:57540"/>
    </ligand>
</feature>
<feature type="binding site" evidence="1">
    <location>
        <begin position="103"/>
        <end position="107"/>
    </location>
    <ligand>
        <name>NAD(+)</name>
        <dbReference type="ChEBI" id="CHEBI:57540"/>
    </ligand>
</feature>
<feature type="binding site" evidence="1">
    <location>
        <begin position="127"/>
        <end position="128"/>
    </location>
    <ligand>
        <name>NAD(+)</name>
        <dbReference type="ChEBI" id="CHEBI:57540"/>
    </ligand>
</feature>
<feature type="binding site" evidence="1">
    <location>
        <position position="140"/>
    </location>
    <ligand>
        <name>NAD(+)</name>
        <dbReference type="ChEBI" id="CHEBI:57540"/>
    </ligand>
</feature>
<feature type="binding site" evidence="1">
    <location>
        <position position="149"/>
    </location>
    <ligand>
        <name>NAD(+)</name>
        <dbReference type="ChEBI" id="CHEBI:57540"/>
    </ligand>
</feature>
<feature type="binding site" evidence="1">
    <location>
        <begin position="167"/>
        <end position="170"/>
    </location>
    <ligand>
        <name>NAD(+)</name>
        <dbReference type="ChEBI" id="CHEBI:57540"/>
    </ligand>
</feature>
<feature type="binding site" evidence="1">
    <location>
        <position position="182"/>
    </location>
    <ligand>
        <name>Zn(2+)</name>
        <dbReference type="ChEBI" id="CHEBI:29105"/>
    </ligand>
</feature>
<feature type="binding site" evidence="1">
    <location>
        <position position="245"/>
    </location>
    <ligand>
        <name>Zn(2+)</name>
        <dbReference type="ChEBI" id="CHEBI:29105"/>
    </ligand>
</feature>
<feature type="binding site" evidence="1">
    <location>
        <position position="262"/>
    </location>
    <ligand>
        <name>Zn(2+)</name>
        <dbReference type="ChEBI" id="CHEBI:29105"/>
    </ligand>
</feature>
<proteinExistence type="inferred from homology"/>
<sequence length="367" mass="39715">MQTLQVDLGERSYPIHIGERLIDRSDLFASKIRGRQVAIVTNETVAPLYLDRLTSTLSGYSVTPIILPDGESHKNWETLQLIFDALLGARHDRNTTVVALGGGVIGDMAGFAAASYQRGVDFIQVPTTLLSQVDSSVGGKTGINHPLGKNMIGAFYQPRAVVIDTATLATLPSRELSAGLAEVIKYGLICDEPFLTWLEANIDRIRSLDSLALTEAIHRSCAAKAKVVNADERESGVRATLNLGHTFGHAIETHMGYGVWLHGEAVSAGTVMALEMSSQLGWIGQADRDRAIRLLQRAGLPVVPPAEMQPQDFLEHMAVDKKVLDGRLRLVLLRQMGEAVVTGDFPRGVLETTLSADYGAMTEHLGA</sequence>
<reference key="1">
    <citation type="journal article" date="2008" name="Proc. Natl. Acad. Sci. U.S.A.">
        <title>Nitrogen fixation island and rhizosphere competence traits in the genome of root-associated Pseudomonas stutzeri A1501.</title>
        <authorList>
            <person name="Yan Y."/>
            <person name="Yang J."/>
            <person name="Dou Y."/>
            <person name="Chen M."/>
            <person name="Ping S."/>
            <person name="Peng J."/>
            <person name="Lu W."/>
            <person name="Zhang W."/>
            <person name="Yao Z."/>
            <person name="Li H."/>
            <person name="Liu W."/>
            <person name="He S."/>
            <person name="Geng L."/>
            <person name="Zhang X."/>
            <person name="Yang F."/>
            <person name="Yu H."/>
            <person name="Zhan Y."/>
            <person name="Li D."/>
            <person name="Lin Z."/>
            <person name="Wang Y."/>
            <person name="Elmerich C."/>
            <person name="Lin M."/>
            <person name="Jin Q."/>
        </authorList>
    </citation>
    <scope>NUCLEOTIDE SEQUENCE [LARGE SCALE GENOMIC DNA]</scope>
    <source>
        <strain>A1501</strain>
    </source>
</reference>
<protein>
    <recommendedName>
        <fullName evidence="1">3-dehydroquinate synthase</fullName>
        <shortName evidence="1">DHQS</shortName>
        <ecNumber evidence="1">4.2.3.4</ecNumber>
    </recommendedName>
</protein>
<comment type="function">
    <text evidence="1">Catalyzes the conversion of 3-deoxy-D-arabino-heptulosonate 7-phosphate (DAHP) to dehydroquinate (DHQ).</text>
</comment>
<comment type="catalytic activity">
    <reaction evidence="1">
        <text>7-phospho-2-dehydro-3-deoxy-D-arabino-heptonate = 3-dehydroquinate + phosphate</text>
        <dbReference type="Rhea" id="RHEA:21968"/>
        <dbReference type="ChEBI" id="CHEBI:32364"/>
        <dbReference type="ChEBI" id="CHEBI:43474"/>
        <dbReference type="ChEBI" id="CHEBI:58394"/>
        <dbReference type="EC" id="4.2.3.4"/>
    </reaction>
</comment>
<comment type="cofactor">
    <cofactor evidence="1">
        <name>Co(2+)</name>
        <dbReference type="ChEBI" id="CHEBI:48828"/>
    </cofactor>
    <cofactor evidence="1">
        <name>Zn(2+)</name>
        <dbReference type="ChEBI" id="CHEBI:29105"/>
    </cofactor>
    <text evidence="1">Binds 1 divalent metal cation per subunit. Can use either Co(2+) or Zn(2+).</text>
</comment>
<comment type="cofactor">
    <cofactor evidence="1">
        <name>NAD(+)</name>
        <dbReference type="ChEBI" id="CHEBI:57540"/>
    </cofactor>
</comment>
<comment type="pathway">
    <text evidence="1">Metabolic intermediate biosynthesis; chorismate biosynthesis; chorismate from D-erythrose 4-phosphate and phosphoenolpyruvate: step 2/7.</text>
</comment>
<comment type="subcellular location">
    <subcellularLocation>
        <location evidence="1">Cytoplasm</location>
    </subcellularLocation>
</comment>
<comment type="similarity">
    <text evidence="1">Belongs to the sugar phosphate cyclases superfamily. Dehydroquinate synthase family.</text>
</comment>
<keyword id="KW-0028">Amino-acid biosynthesis</keyword>
<keyword id="KW-0057">Aromatic amino acid biosynthesis</keyword>
<keyword id="KW-0170">Cobalt</keyword>
<keyword id="KW-0963">Cytoplasm</keyword>
<keyword id="KW-0456">Lyase</keyword>
<keyword id="KW-0479">Metal-binding</keyword>
<keyword id="KW-0520">NAD</keyword>
<keyword id="KW-0547">Nucleotide-binding</keyword>
<keyword id="KW-1185">Reference proteome</keyword>
<keyword id="KW-0862">Zinc</keyword>